<evidence type="ECO:0000250" key="1"/>
<evidence type="ECO:0000250" key="2">
    <source>
        <dbReference type="UniProtKB" id="P02795"/>
    </source>
</evidence>
<evidence type="ECO:0000250" key="3">
    <source>
        <dbReference type="UniProtKB" id="P62339"/>
    </source>
</evidence>
<evidence type="ECO:0000305" key="4"/>
<protein>
    <recommendedName>
        <fullName>Metallothionein A</fullName>
        <shortName>MT-A</shortName>
    </recommendedName>
</protein>
<gene>
    <name type="primary">mta</name>
</gene>
<accession>O93593</accession>
<comment type="function">
    <text evidence="1">Metallothioneins have a high content of cysteine residues that bind various heavy metals.</text>
</comment>
<comment type="domain">
    <text>Class I metallothioneins contain 2 metal-binding domains: four divalent ions are chelated within cluster A of the alpha domain and are coordinated via cysteinyl thiolate bridges to 11 cysteine ligands. Cluster B, the corresponding region within the beta domain, can ligate three divalent ions to 9 cysteines.</text>
</comment>
<comment type="similarity">
    <text evidence="4">Belongs to the metallothionein superfamily. Type 1 family.</text>
</comment>
<name>MTA_CHAAC</name>
<feature type="chain" id="PRO_0000197273" description="Metallothionein A">
    <location>
        <begin position="1"/>
        <end position="60"/>
    </location>
</feature>
<feature type="region of interest" description="Beta">
    <location>
        <begin position="1"/>
        <end position="28"/>
    </location>
</feature>
<feature type="region of interest" description="Alpha">
    <location>
        <begin position="29"/>
        <end position="60"/>
    </location>
</feature>
<feature type="binding site" evidence="2">
    <location>
        <position position="4"/>
    </location>
    <ligand>
        <name>a divalent metal cation</name>
        <dbReference type="ChEBI" id="CHEBI:60240"/>
        <label>1</label>
        <note>in cluster B</note>
    </ligand>
</feature>
<feature type="binding site" evidence="2">
    <location>
        <position position="6"/>
    </location>
    <ligand>
        <name>a divalent metal cation</name>
        <dbReference type="ChEBI" id="CHEBI:60240"/>
        <label>1</label>
        <note>in cluster B</note>
    </ligand>
</feature>
<feature type="binding site" evidence="2">
    <location>
        <position position="6"/>
    </location>
    <ligand>
        <name>a divalent metal cation</name>
        <dbReference type="ChEBI" id="CHEBI:60240"/>
        <label>2</label>
        <note>in cluster B</note>
    </ligand>
</feature>
<feature type="binding site" evidence="2">
    <location>
        <position position="12"/>
    </location>
    <ligand>
        <name>a divalent metal cation</name>
        <dbReference type="ChEBI" id="CHEBI:60240"/>
        <label>2</label>
        <note>in cluster B</note>
    </ligand>
</feature>
<feature type="binding site" evidence="2">
    <location>
        <position position="14"/>
    </location>
    <ligand>
        <name>a divalent metal cation</name>
        <dbReference type="ChEBI" id="CHEBI:60240"/>
        <label>2</label>
        <note>in cluster B</note>
    </ligand>
</feature>
<feature type="binding site" evidence="2">
    <location>
        <position position="14"/>
    </location>
    <ligand>
        <name>a divalent metal cation</name>
        <dbReference type="ChEBI" id="CHEBI:60240"/>
        <label>3</label>
        <note>in cluster B</note>
    </ligand>
</feature>
<feature type="binding site" evidence="2">
    <location>
        <position position="18"/>
    </location>
    <ligand>
        <name>a divalent metal cation</name>
        <dbReference type="ChEBI" id="CHEBI:60240"/>
        <label>3</label>
        <note>in cluster B</note>
    </ligand>
</feature>
<feature type="binding site" evidence="2">
    <location>
        <position position="20"/>
    </location>
    <ligand>
        <name>a divalent metal cation</name>
        <dbReference type="ChEBI" id="CHEBI:60240"/>
        <label>1</label>
        <note>in cluster B</note>
    </ligand>
</feature>
<feature type="binding site" evidence="2">
    <location>
        <position position="23"/>
    </location>
    <ligand>
        <name>a divalent metal cation</name>
        <dbReference type="ChEBI" id="CHEBI:60240"/>
        <label>1</label>
        <note>in cluster B</note>
    </ligand>
</feature>
<feature type="binding site" evidence="2">
    <location>
        <position position="23"/>
    </location>
    <ligand>
        <name>a divalent metal cation</name>
        <dbReference type="ChEBI" id="CHEBI:60240"/>
        <label>3</label>
        <note>in cluster B</note>
    </ligand>
</feature>
<feature type="binding site" evidence="2">
    <location>
        <position position="25"/>
    </location>
    <ligand>
        <name>a divalent metal cation</name>
        <dbReference type="ChEBI" id="CHEBI:60240"/>
        <label>2</label>
        <note>in cluster B</note>
    </ligand>
</feature>
<feature type="binding site" evidence="2">
    <location>
        <position position="28"/>
    </location>
    <ligand>
        <name>a divalent metal cation</name>
        <dbReference type="ChEBI" id="CHEBI:60240"/>
        <label>3</label>
        <note>in cluster B</note>
    </ligand>
</feature>
<feature type="binding site" evidence="2">
    <location>
        <position position="32"/>
    </location>
    <ligand>
        <name>a divalent metal cation</name>
        <dbReference type="ChEBI" id="CHEBI:60240"/>
        <label>4</label>
        <note>in cluster A</note>
    </ligand>
</feature>
<feature type="binding site" evidence="2">
    <location>
        <position position="33"/>
    </location>
    <ligand>
        <name>a divalent metal cation</name>
        <dbReference type="ChEBI" id="CHEBI:60240"/>
        <label>4</label>
        <note>in cluster A</note>
    </ligand>
</feature>
<feature type="binding site" evidence="2">
    <location>
        <position position="33"/>
    </location>
    <ligand>
        <name>a divalent metal cation</name>
        <dbReference type="ChEBI" id="CHEBI:60240"/>
        <label>5</label>
        <note>in cluster A</note>
    </ligand>
</feature>
<feature type="binding site" evidence="2">
    <location>
        <position position="35"/>
    </location>
    <ligand>
        <name>a divalent metal cation</name>
        <dbReference type="ChEBI" id="CHEBI:60240"/>
        <label>5</label>
        <note>in cluster A</note>
    </ligand>
</feature>
<feature type="binding site" evidence="2">
    <location>
        <position position="36"/>
    </location>
    <ligand>
        <name>a divalent metal cation</name>
        <dbReference type="ChEBI" id="CHEBI:60240"/>
        <label>5</label>
        <note>in cluster A</note>
    </ligand>
</feature>
<feature type="binding site" evidence="2">
    <location>
        <position position="36"/>
    </location>
    <ligand>
        <name>a divalent metal cation</name>
        <dbReference type="ChEBI" id="CHEBI:60240"/>
        <label>6</label>
        <note>in cluster A</note>
    </ligand>
</feature>
<feature type="binding site" evidence="2">
    <location>
        <position position="40"/>
    </location>
    <ligand>
        <name>a divalent metal cation</name>
        <dbReference type="ChEBI" id="CHEBI:60240"/>
        <label>6</label>
        <note>in cluster A</note>
    </ligand>
</feature>
<feature type="binding site" evidence="2">
    <location>
        <position position="43"/>
    </location>
    <ligand>
        <name>a divalent metal cation</name>
        <dbReference type="ChEBI" id="CHEBI:60240"/>
        <label>4</label>
        <note>in cluster A</note>
    </ligand>
</feature>
<feature type="binding site" evidence="2">
    <location>
        <position position="43"/>
    </location>
    <ligand>
        <name>a divalent metal cation</name>
        <dbReference type="ChEBI" id="CHEBI:60240"/>
        <label>6</label>
        <note>in cluster A</note>
    </ligand>
</feature>
<feature type="binding site" evidence="2">
    <location>
        <position position="47"/>
    </location>
    <ligand>
        <name>a divalent metal cation</name>
        <dbReference type="ChEBI" id="CHEBI:60240"/>
        <label>4</label>
        <note>in cluster A</note>
    </ligand>
</feature>
<feature type="binding site" evidence="2">
    <location>
        <position position="49"/>
    </location>
    <ligand>
        <name>a divalent metal cation</name>
        <dbReference type="ChEBI" id="CHEBI:60240"/>
        <label>5</label>
        <note>in cluster A</note>
    </ligand>
</feature>
<feature type="binding site" evidence="2">
    <location>
        <position position="49"/>
    </location>
    <ligand>
        <name>a divalent metal cation</name>
        <dbReference type="ChEBI" id="CHEBI:60240"/>
        <label>7</label>
        <note>in cluster A</note>
    </ligand>
</feature>
<feature type="binding site" evidence="3">
    <location>
        <position position="54"/>
    </location>
    <ligand>
        <name>a divalent metal cation</name>
        <dbReference type="ChEBI" id="CHEBI:60240"/>
        <label>7</label>
        <note>in cluster A</note>
    </ligand>
</feature>
<feature type="binding site" evidence="2">
    <location>
        <position position="58"/>
    </location>
    <ligand>
        <name>a divalent metal cation</name>
        <dbReference type="ChEBI" id="CHEBI:60240"/>
        <label>7</label>
        <note>in cluster A</note>
    </ligand>
</feature>
<feature type="binding site" evidence="2">
    <location>
        <position position="59"/>
    </location>
    <ligand>
        <name>a divalent metal cation</name>
        <dbReference type="ChEBI" id="CHEBI:60240"/>
        <label>6</label>
        <note>in cluster A</note>
    </ligand>
</feature>
<feature type="binding site" evidence="2">
    <location>
        <position position="59"/>
    </location>
    <ligand>
        <name>a divalent metal cation</name>
        <dbReference type="ChEBI" id="CHEBI:60240"/>
        <label>7</label>
        <note>in cluster A</note>
    </ligand>
</feature>
<dbReference type="EMBL" id="AJ011583">
    <property type="protein sequence ID" value="CAA09713.1"/>
    <property type="molecule type" value="mRNA"/>
</dbReference>
<dbReference type="SMR" id="O93593"/>
<dbReference type="GO" id="GO:0046872">
    <property type="term" value="F:metal ion binding"/>
    <property type="evidence" value="ECO:0007669"/>
    <property type="project" value="UniProtKB-KW"/>
</dbReference>
<dbReference type="FunFam" id="4.10.10.10:FF:000001">
    <property type="entry name" value="Metallothionein"/>
    <property type="match status" value="1"/>
</dbReference>
<dbReference type="Gene3D" id="4.10.10.10">
    <property type="entry name" value="Metallothionein Isoform II"/>
    <property type="match status" value="1"/>
</dbReference>
<dbReference type="InterPro" id="IPR017854">
    <property type="entry name" value="Metalthion_dom_sf"/>
</dbReference>
<dbReference type="InterPro" id="IPR023587">
    <property type="entry name" value="Metalthion_dom_sf_vert"/>
</dbReference>
<dbReference type="InterPro" id="IPR000006">
    <property type="entry name" value="Metalthion_vert"/>
</dbReference>
<dbReference type="InterPro" id="IPR018064">
    <property type="entry name" value="Metalthion_vert_metal_BS"/>
</dbReference>
<dbReference type="PANTHER" id="PTHR23299">
    <property type="entry name" value="METALLOTHIONEIN"/>
    <property type="match status" value="1"/>
</dbReference>
<dbReference type="PANTHER" id="PTHR23299:SF24">
    <property type="entry name" value="METALLOTHIONEIN-1X"/>
    <property type="match status" value="1"/>
</dbReference>
<dbReference type="Pfam" id="PF00131">
    <property type="entry name" value="Metallothio"/>
    <property type="match status" value="1"/>
</dbReference>
<dbReference type="PRINTS" id="PR00860">
    <property type="entry name" value="MTVERTEBRATE"/>
</dbReference>
<dbReference type="SUPFAM" id="SSF57868">
    <property type="entry name" value="Metallothionein"/>
    <property type="match status" value="1"/>
</dbReference>
<dbReference type="PROSITE" id="PS00203">
    <property type="entry name" value="METALLOTHIONEIN_VRT"/>
    <property type="match status" value="1"/>
</dbReference>
<proteinExistence type="inferred from homology"/>
<reference key="1">
    <citation type="journal article" date="1999" name="Mol. Biol. Evol.">
        <title>Metallothioneins in antarctic fish: evidence for independent duplication and gene conversion.</title>
        <authorList>
            <person name="Bargelloni L."/>
            <person name="Scudiero R."/>
            <person name="Parisi E."/>
            <person name="Carginale V."/>
            <person name="Capasso C."/>
            <person name="Patarnello T."/>
        </authorList>
    </citation>
    <scope>NUCLEOTIDE SEQUENCE [MRNA]</scope>
    <source>
        <tissue>Liver</tissue>
    </source>
</reference>
<sequence>MDPCECSKSGNCNCGGSCTCTNCSCKSCKKSCCPCCPSGCTKCASGCVCIGKTCDTSCCQ</sequence>
<organism>
    <name type="scientific">Chaenocephalus aceratus</name>
    <name type="common">Blackfin icefish</name>
    <name type="synonym">Chaenichthys aceratus</name>
    <dbReference type="NCBI Taxonomy" id="36190"/>
    <lineage>
        <taxon>Eukaryota</taxon>
        <taxon>Metazoa</taxon>
        <taxon>Chordata</taxon>
        <taxon>Craniata</taxon>
        <taxon>Vertebrata</taxon>
        <taxon>Euteleostomi</taxon>
        <taxon>Actinopterygii</taxon>
        <taxon>Neopterygii</taxon>
        <taxon>Teleostei</taxon>
        <taxon>Neoteleostei</taxon>
        <taxon>Acanthomorphata</taxon>
        <taxon>Eupercaria</taxon>
        <taxon>Perciformes</taxon>
        <taxon>Notothenioidei</taxon>
        <taxon>Channichthyidae</taxon>
        <taxon>Chaenocephalus</taxon>
    </lineage>
</organism>
<keyword id="KW-0479">Metal-binding</keyword>
<keyword id="KW-0480">Metal-thiolate cluster</keyword>
<keyword id="KW-0862">Zinc</keyword>